<keyword id="KW-0878">Amphibian defense peptide</keyword>
<keyword id="KW-0903">Direct protein sequencing</keyword>
<keyword id="KW-1213">G-protein coupled receptor impairing toxin</keyword>
<keyword id="KW-0964">Secreted</keyword>
<keyword id="KW-0800">Toxin</keyword>
<keyword id="KW-0838">Vasoactive</keyword>
<keyword id="KW-0840">Vasodilator</keyword>
<proteinExistence type="evidence at protein level"/>
<reference key="1">
    <citation type="journal article" date="1968" name="Chem. Pharm. Bull.">
        <title>On the third active peptide on smooth muscle in the skin of Rana nigromaculata hallowell.</title>
        <authorList>
            <person name="Nakajima T."/>
        </authorList>
    </citation>
    <scope>PROTEIN SEQUENCE</scope>
    <source>
        <tissue>Skin</tissue>
    </source>
</reference>
<comment type="function">
    <text>Induces smooth muscle contraction. May target bradykinin receptors (BDKRB).</text>
</comment>
<comment type="subcellular location">
    <subcellularLocation>
        <location>Secreted</location>
    </subcellularLocation>
</comment>
<comment type="tissue specificity">
    <text>Expressed by the skin glands.</text>
</comment>
<comment type="similarity">
    <text evidence="1">Belongs to the bradykinin-related peptide family.</text>
</comment>
<feature type="peptide" id="PRO_0000043525" description="Bradykinin-like peptide 3">
    <location>
        <begin position="1"/>
        <end position="14"/>
    </location>
</feature>
<dbReference type="PIR" id="A61362">
    <property type="entry name" value="A61362"/>
</dbReference>
<dbReference type="GO" id="GO:0005576">
    <property type="term" value="C:extracellular region"/>
    <property type="evidence" value="ECO:0007669"/>
    <property type="project" value="UniProtKB-SubCell"/>
</dbReference>
<dbReference type="GO" id="GO:0090729">
    <property type="term" value="F:toxin activity"/>
    <property type="evidence" value="ECO:0007669"/>
    <property type="project" value="UniProtKB-KW"/>
</dbReference>
<dbReference type="GO" id="GO:0006952">
    <property type="term" value="P:defense response"/>
    <property type="evidence" value="ECO:0007669"/>
    <property type="project" value="UniProtKB-KW"/>
</dbReference>
<dbReference type="GO" id="GO:0042311">
    <property type="term" value="P:vasodilation"/>
    <property type="evidence" value="ECO:0007669"/>
    <property type="project" value="UniProtKB-KW"/>
</dbReference>
<protein>
    <recommendedName>
        <fullName>Bradykinin-like peptide 3</fullName>
    </recommendedName>
</protein>
<name>BRK3_PELNI</name>
<evidence type="ECO:0000305" key="1"/>
<organism>
    <name type="scientific">Pelophylax nigromaculatus</name>
    <name type="common">Black-spotted frog</name>
    <name type="synonym">Rana nigromaculata</name>
    <dbReference type="NCBI Taxonomy" id="8409"/>
    <lineage>
        <taxon>Eukaryota</taxon>
        <taxon>Metazoa</taxon>
        <taxon>Chordata</taxon>
        <taxon>Craniata</taxon>
        <taxon>Vertebrata</taxon>
        <taxon>Euteleostomi</taxon>
        <taxon>Amphibia</taxon>
        <taxon>Batrachia</taxon>
        <taxon>Anura</taxon>
        <taxon>Neobatrachia</taxon>
        <taxon>Ranoidea</taxon>
        <taxon>Ranidae</taxon>
        <taxon>Pelophylax</taxon>
    </lineage>
</organism>
<sequence>RPPGFSPFRVAPAS</sequence>
<accession>Q7LZ53</accession>